<dbReference type="EC" id="1.-.-.-" evidence="8"/>
<dbReference type="EMBL" id="BN001308">
    <property type="protein sequence ID" value="CBF87243.1"/>
    <property type="molecule type" value="Genomic_DNA"/>
</dbReference>
<dbReference type="EMBL" id="AACD01000172">
    <property type="protein sequence ID" value="EAA66315.1"/>
    <property type="molecule type" value="Genomic_DNA"/>
</dbReference>
<dbReference type="RefSeq" id="XP_682517.1">
    <property type="nucleotide sequence ID" value="XM_677425.1"/>
</dbReference>
<dbReference type="SMR" id="Q5AR32"/>
<dbReference type="STRING" id="227321.Q5AR32"/>
<dbReference type="EnsemblFungi" id="CBF87243">
    <property type="protein sequence ID" value="CBF87243"/>
    <property type="gene ID" value="ANIA_09248"/>
</dbReference>
<dbReference type="KEGG" id="ani:ANIA_09248"/>
<dbReference type="VEuPathDB" id="FungiDB:AN9248"/>
<dbReference type="eggNOG" id="KOG0157">
    <property type="taxonomic scope" value="Eukaryota"/>
</dbReference>
<dbReference type="HOGENOM" id="CLU_022195_0_3_1"/>
<dbReference type="InParanoid" id="Q5AR32"/>
<dbReference type="OMA" id="IEWFERT"/>
<dbReference type="OrthoDB" id="1844152at2759"/>
<dbReference type="UniPathway" id="UPA00213"/>
<dbReference type="Proteomes" id="UP000000560">
    <property type="component" value="Chromosome VIII"/>
</dbReference>
<dbReference type="GO" id="GO:0016020">
    <property type="term" value="C:membrane"/>
    <property type="evidence" value="ECO:0007669"/>
    <property type="project" value="UniProtKB-SubCell"/>
</dbReference>
<dbReference type="GO" id="GO:0020037">
    <property type="term" value="F:heme binding"/>
    <property type="evidence" value="ECO:0007669"/>
    <property type="project" value="InterPro"/>
</dbReference>
<dbReference type="GO" id="GO:0005506">
    <property type="term" value="F:iron ion binding"/>
    <property type="evidence" value="ECO:0007669"/>
    <property type="project" value="InterPro"/>
</dbReference>
<dbReference type="GO" id="GO:0004497">
    <property type="term" value="F:monooxygenase activity"/>
    <property type="evidence" value="ECO:0007669"/>
    <property type="project" value="UniProtKB-KW"/>
</dbReference>
<dbReference type="GO" id="GO:0016705">
    <property type="term" value="F:oxidoreductase activity, acting on paired donors, with incorporation or reduction of molecular oxygen"/>
    <property type="evidence" value="ECO:0007669"/>
    <property type="project" value="InterPro"/>
</dbReference>
<dbReference type="GO" id="GO:1900560">
    <property type="term" value="P:austinol biosynthetic process"/>
    <property type="evidence" value="ECO:0000315"/>
    <property type="project" value="AspGD"/>
</dbReference>
<dbReference type="GO" id="GO:1900563">
    <property type="term" value="P:dehydroaustinol biosynthetic process"/>
    <property type="evidence" value="ECO:0000315"/>
    <property type="project" value="AspGD"/>
</dbReference>
<dbReference type="GO" id="GO:0016114">
    <property type="term" value="P:terpenoid biosynthetic process"/>
    <property type="evidence" value="ECO:0007669"/>
    <property type="project" value="UniProtKB-UniPathway"/>
</dbReference>
<dbReference type="CDD" id="cd11041">
    <property type="entry name" value="CYP503A1-like"/>
    <property type="match status" value="1"/>
</dbReference>
<dbReference type="FunFam" id="1.10.630.10:FF:000059">
    <property type="entry name" value="Cytochrome P450 monooxygenase"/>
    <property type="match status" value="1"/>
</dbReference>
<dbReference type="Gene3D" id="1.10.630.10">
    <property type="entry name" value="Cytochrome P450"/>
    <property type="match status" value="1"/>
</dbReference>
<dbReference type="InterPro" id="IPR001128">
    <property type="entry name" value="Cyt_P450"/>
</dbReference>
<dbReference type="InterPro" id="IPR017972">
    <property type="entry name" value="Cyt_P450_CS"/>
</dbReference>
<dbReference type="InterPro" id="IPR002403">
    <property type="entry name" value="Cyt_P450_E_grp-IV"/>
</dbReference>
<dbReference type="InterPro" id="IPR036396">
    <property type="entry name" value="Cyt_P450_sf"/>
</dbReference>
<dbReference type="PANTHER" id="PTHR46206">
    <property type="entry name" value="CYTOCHROME P450"/>
    <property type="match status" value="1"/>
</dbReference>
<dbReference type="PANTHER" id="PTHR46206:SF2">
    <property type="entry name" value="CYTOCHROME P450 MONOOXYGENASE AUSG-RELATED"/>
    <property type="match status" value="1"/>
</dbReference>
<dbReference type="Pfam" id="PF00067">
    <property type="entry name" value="p450"/>
    <property type="match status" value="1"/>
</dbReference>
<dbReference type="PRINTS" id="PR00465">
    <property type="entry name" value="EP450IV"/>
</dbReference>
<dbReference type="SUPFAM" id="SSF48264">
    <property type="entry name" value="Cytochrome P450"/>
    <property type="match status" value="1"/>
</dbReference>
<dbReference type="PROSITE" id="PS00086">
    <property type="entry name" value="CYTOCHROME_P450"/>
    <property type="match status" value="1"/>
</dbReference>
<evidence type="ECO:0000250" key="1">
    <source>
        <dbReference type="UniProtKB" id="P04798"/>
    </source>
</evidence>
<evidence type="ECO:0000255" key="2"/>
<evidence type="ECO:0000269" key="3">
    <source>
    </source>
</evidence>
<evidence type="ECO:0000269" key="4">
    <source>
    </source>
</evidence>
<evidence type="ECO:0000269" key="5">
    <source>
    </source>
</evidence>
<evidence type="ECO:0000269" key="6">
    <source>
    </source>
</evidence>
<evidence type="ECO:0000303" key="7">
    <source>
    </source>
</evidence>
<evidence type="ECO:0000305" key="8"/>
<evidence type="ECO:0000305" key="9">
    <source>
    </source>
</evidence>
<gene>
    <name evidence="7" type="primary">ausG</name>
    <name type="ORF">AN9248</name>
</gene>
<reference key="1">
    <citation type="journal article" date="2005" name="Nature">
        <title>Sequencing of Aspergillus nidulans and comparative analysis with A. fumigatus and A. oryzae.</title>
        <authorList>
            <person name="Galagan J.E."/>
            <person name="Calvo S.E."/>
            <person name="Cuomo C."/>
            <person name="Ma L.-J."/>
            <person name="Wortman J.R."/>
            <person name="Batzoglou S."/>
            <person name="Lee S.-I."/>
            <person name="Bastuerkmen M."/>
            <person name="Spevak C.C."/>
            <person name="Clutterbuck J."/>
            <person name="Kapitonov V."/>
            <person name="Jurka J."/>
            <person name="Scazzocchio C."/>
            <person name="Farman M.L."/>
            <person name="Butler J."/>
            <person name="Purcell S."/>
            <person name="Harris S."/>
            <person name="Braus G.H."/>
            <person name="Draht O."/>
            <person name="Busch S."/>
            <person name="D'Enfert C."/>
            <person name="Bouchier C."/>
            <person name="Goldman G.H."/>
            <person name="Bell-Pedersen D."/>
            <person name="Griffiths-Jones S."/>
            <person name="Doonan J.H."/>
            <person name="Yu J."/>
            <person name="Vienken K."/>
            <person name="Pain A."/>
            <person name="Freitag M."/>
            <person name="Selker E.U."/>
            <person name="Archer D.B."/>
            <person name="Penalva M.A."/>
            <person name="Oakley B.R."/>
            <person name="Momany M."/>
            <person name="Tanaka T."/>
            <person name="Kumagai T."/>
            <person name="Asai K."/>
            <person name="Machida M."/>
            <person name="Nierman W.C."/>
            <person name="Denning D.W."/>
            <person name="Caddick M.X."/>
            <person name="Hynes M."/>
            <person name="Paoletti M."/>
            <person name="Fischer R."/>
            <person name="Miller B.L."/>
            <person name="Dyer P.S."/>
            <person name="Sachs M.S."/>
            <person name="Osmani S.A."/>
            <person name="Birren B.W."/>
        </authorList>
    </citation>
    <scope>NUCLEOTIDE SEQUENCE [LARGE SCALE GENOMIC DNA]</scope>
    <source>
        <strain>FGSC A4 / ATCC 38163 / CBS 112.46 / NRRL 194 / M139</strain>
    </source>
</reference>
<reference key="2">
    <citation type="journal article" date="2009" name="Fungal Genet. Biol.">
        <title>The 2008 update of the Aspergillus nidulans genome annotation: a community effort.</title>
        <authorList>
            <person name="Wortman J.R."/>
            <person name="Gilsenan J.M."/>
            <person name="Joardar V."/>
            <person name="Deegan J."/>
            <person name="Clutterbuck J."/>
            <person name="Andersen M.R."/>
            <person name="Archer D."/>
            <person name="Bencina M."/>
            <person name="Braus G."/>
            <person name="Coutinho P."/>
            <person name="von Dohren H."/>
            <person name="Doonan J."/>
            <person name="Driessen A.J."/>
            <person name="Durek P."/>
            <person name="Espeso E."/>
            <person name="Fekete E."/>
            <person name="Flipphi M."/>
            <person name="Estrada C.G."/>
            <person name="Geysens S."/>
            <person name="Goldman G."/>
            <person name="de Groot P.W."/>
            <person name="Hansen K."/>
            <person name="Harris S.D."/>
            <person name="Heinekamp T."/>
            <person name="Helmstaedt K."/>
            <person name="Henrissat B."/>
            <person name="Hofmann G."/>
            <person name="Homan T."/>
            <person name="Horio T."/>
            <person name="Horiuchi H."/>
            <person name="James S."/>
            <person name="Jones M."/>
            <person name="Karaffa L."/>
            <person name="Karanyi Z."/>
            <person name="Kato M."/>
            <person name="Keller N."/>
            <person name="Kelly D.E."/>
            <person name="Kiel J.A."/>
            <person name="Kim J.M."/>
            <person name="van der Klei I.J."/>
            <person name="Klis F.M."/>
            <person name="Kovalchuk A."/>
            <person name="Krasevec N."/>
            <person name="Kubicek C.P."/>
            <person name="Liu B."/>
            <person name="Maccabe A."/>
            <person name="Meyer V."/>
            <person name="Mirabito P."/>
            <person name="Miskei M."/>
            <person name="Mos M."/>
            <person name="Mullins J."/>
            <person name="Nelson D.R."/>
            <person name="Nielsen J."/>
            <person name="Oakley B.R."/>
            <person name="Osmani S.A."/>
            <person name="Pakula T."/>
            <person name="Paszewski A."/>
            <person name="Paulsen I."/>
            <person name="Pilsyk S."/>
            <person name="Pocsi I."/>
            <person name="Punt P.J."/>
            <person name="Ram A.F."/>
            <person name="Ren Q."/>
            <person name="Robellet X."/>
            <person name="Robson G."/>
            <person name="Seiboth B."/>
            <person name="van Solingen P."/>
            <person name="Specht T."/>
            <person name="Sun J."/>
            <person name="Taheri-Talesh N."/>
            <person name="Takeshita N."/>
            <person name="Ussery D."/>
            <person name="vanKuyk P.A."/>
            <person name="Visser H."/>
            <person name="van de Vondervoort P.J."/>
            <person name="de Vries R.P."/>
            <person name="Walton J."/>
            <person name="Xiang X."/>
            <person name="Xiong Y."/>
            <person name="Zeng A.P."/>
            <person name="Brandt B.W."/>
            <person name="Cornell M.J."/>
            <person name="van den Hondel C.A."/>
            <person name="Visser J."/>
            <person name="Oliver S.G."/>
            <person name="Turner G."/>
        </authorList>
    </citation>
    <scope>GENOME REANNOTATION</scope>
    <source>
        <strain>FGSC A4 / ATCC 38163 / CBS 112.46 / NRRL 194 / M139</strain>
    </source>
</reference>
<reference key="3">
    <citation type="journal article" date="2012" name="ACS Chem. Biol.">
        <title>Signaling the induction of sporulation involves the interaction of two secondary metabolites in Aspergillus nidulans.</title>
        <authorList>
            <person name="Rodriguez-Urra A.B."/>
            <person name="Jimenez C."/>
            <person name="Nieto M.I."/>
            <person name="Rodriguez J."/>
            <person name="Hayashi H."/>
            <person name="Ugalde U."/>
        </authorList>
    </citation>
    <scope>FUNCTION</scope>
</reference>
<reference key="4">
    <citation type="journal article" date="2012" name="J. Am. Chem. Soc.">
        <title>Two separate gene clusters encode the biosynthetic pathway for the meroterpenoids austinol and dehydroaustinol in Aspergillus nidulans.</title>
        <authorList>
            <person name="Lo H.C."/>
            <person name="Entwistle R."/>
            <person name="Guo C.J."/>
            <person name="Ahuja M."/>
            <person name="Szewczyk E."/>
            <person name="Hung J.H."/>
            <person name="Chiang Y.M."/>
            <person name="Oakley B.R."/>
            <person name="Wang C.C."/>
        </authorList>
    </citation>
    <scope>FUNCTION</scope>
    <scope>DISRUPTION PHENOTYPE</scope>
</reference>
<reference key="5">
    <citation type="journal article" date="2013" name="J. Am. Chem. Soc.">
        <title>Spiro-ring formation is catalyzed by a multifunctional dioxygenase in austinol biosynthesis.</title>
        <authorList>
            <person name="Matsuda Y."/>
            <person name="Awakawa T."/>
            <person name="Wakimoto T."/>
            <person name="Abe I."/>
        </authorList>
    </citation>
    <scope>FUNCTION</scope>
</reference>
<reference key="6">
    <citation type="journal article" date="2017" name="ACS Chem. Biol.">
        <title>Rewiring of the austinoid biosynthetic pathway in filamentous fungi.</title>
        <authorList>
            <person name="Mattern D.J."/>
            <person name="Valiante V."/>
            <person name="Horn F."/>
            <person name="Petzke L."/>
            <person name="Brakhage A.A."/>
        </authorList>
    </citation>
    <scope>FUNCTION</scope>
</reference>
<keyword id="KW-0349">Heme</keyword>
<keyword id="KW-0408">Iron</keyword>
<keyword id="KW-0472">Membrane</keyword>
<keyword id="KW-0479">Metal-binding</keyword>
<keyword id="KW-0503">Monooxygenase</keyword>
<keyword id="KW-0560">Oxidoreductase</keyword>
<keyword id="KW-1185">Reference proteome</keyword>
<keyword id="KW-0812">Transmembrane</keyword>
<keyword id="KW-1133">Transmembrane helix</keyword>
<comment type="function">
    <text evidence="3 4 5 6">Cytochrome P450 monooxygenase; part of the gene cluster B that mediates the biosynthesis of austinol and dehydroaustinol, two fungal meroterpenoids (PubMed:22329759). The first step of the pathway is the synthesis of 3,5-dimethylorsellinic acid by the polyketide synthase ausA (PubMed:22329759). 3,5-dimethylorsellinic acid is then prenylated by the polyprenyl transferase ausN (PubMed:22329759). Further epoxidation by the FAD-dependent monooxygenase ausM and cyclization by the probable terpene cyclase ausL lead to the formation of protoaustinoid A (PubMed:22329759). Protoaustinoid A is then oxidized to spiro-lactone preaustinoid A3 by the combined action of the FAD-binding monooxygenases ausB and ausC, and the dioxygenase ausE (PubMed:22329759, PubMed:23865690). Acid-catalyzed keto-rearrangement and ring contraction of the tetraketide portion of preaustinoid A3 by ausJ lead to the formation of preaustinoid A4 (PubMed:22329759). The aldo-keto reductase ausK, with the help of ausH, is involved in the next step by transforming preaustinoid A4 into isoaustinone which is in turn hydroxylated by the P450 monooxygenase ausI to form austinolide (PubMed:22329759). Finally, the cytochrome P450 monooxygenase ausG modifies austinolide to austinol (PubMed:22329759). Austinol can be further modified to dehydroaustinol which forms a diffusible complex with diorcinol that initiates conidiation (PubMed:22234162, PubMed:22329759). Due to genetic rearrangements of the clusters and the subsequent loss of some enzymes, the end products of the Emericella nidulans austinoid biosynthesis clusters are austinol and dehydroaustinol, even if additional enzymes, such as the O-acetyltransferase ausQ and the cytochrome P450 monooxygenase ausR are still functional (PubMed:29076725).</text>
</comment>
<comment type="cofactor">
    <cofactor evidence="1">
        <name>heme</name>
        <dbReference type="ChEBI" id="CHEBI:30413"/>
    </cofactor>
</comment>
<comment type="pathway">
    <text evidence="4">Secondary metabolite biosynthesis; terpenoid biosynthesis.</text>
</comment>
<comment type="subcellular location">
    <subcellularLocation>
        <location evidence="2">Membrane</location>
        <topology evidence="2">Single-pass membrane protein</topology>
    </subcellularLocation>
</comment>
<comment type="disruption phenotype">
    <text evidence="4">Impairs the synthesis of austinol and dehydroaustinol and accumulates the intermediate compound austinolide (PubMed:22329759).</text>
</comment>
<comment type="miscellaneous">
    <text evidence="9">In A.calidoustus, the austinoid gene cluster lies on a contiguous DNA region, while clusters from E.nidulans and P.brasilianum are split in their respective genomes. Genetic rearrangements provoked variability among the clusters and E.nidulans produces the least number of austionoid derivatives with the end products austinol and dehydroaustinol, while P.brasilianum can produce until acetoxydehydroaustin, and A.calidoustus produces the highest number of identified derivatives.</text>
</comment>
<comment type="similarity">
    <text evidence="8">Belongs to the cytochrome P450 family.</text>
</comment>
<feature type="chain" id="PRO_0000436488" description="Cytochrome P450 monooxygenase ausG">
    <location>
        <begin position="1"/>
        <end position="529"/>
    </location>
</feature>
<feature type="transmembrane region" description="Helical" evidence="2">
    <location>
        <begin position="31"/>
        <end position="51"/>
    </location>
</feature>
<feature type="binding site" description="axial binding residue" evidence="1">
    <location>
        <position position="470"/>
    </location>
    <ligand>
        <name>heme</name>
        <dbReference type="ChEBI" id="CHEBI:30413"/>
    </ligand>
    <ligandPart>
        <name>Fe</name>
        <dbReference type="ChEBI" id="CHEBI:18248"/>
    </ligandPart>
</feature>
<name>AUSG_EMENI</name>
<proteinExistence type="inferred from homology"/>
<protein>
    <recommendedName>
        <fullName evidence="8">Cytochrome P450 monooxygenase ausG</fullName>
        <ecNumber evidence="8">1.-.-.-</ecNumber>
    </recommendedName>
    <alternativeName>
        <fullName evidence="7">Austinoid biosynthesis clusters protein G</fullName>
    </alternativeName>
</protein>
<sequence length="529" mass="59273">MAMGNPELRTHFFRSSHEPGIPNSLRFPNGFLVTCGLPWLLLLFSVTIILFHPLRKKSDLPLINPGKGRIGILRGYRSRKTFTTELPRLVADGLSKASAFRIAAPDGVNIVLAPSYAHEIAEHPDLNPGPIAGDEFNSHINGFEVFAQLGTSDVISESVRTRLTRQLTKLTPLLTSETPLLLQSQWKDAPDWVEVSPHETALFILSRLSSLVFVGDDLGRNPDWIRILTSYNTEAFAAAEELNLWPQILRPLIARLKPSCRQLRRYIRDARALLVPVLEQRRHAQSQGDRREYNDAIEWLDETSRSTGQPYDPILSQMLLAIGSFHTSSDLLGQVLLDLCMRPDWKVLVRELRKEIISSLQGEGWDKIALNNLKLMDSVLKESQRLKPASTVTMGRYASREITLSDGTIIPKGSTVFIANVAMRDSNIYPDPDDFVPDRFTTRREKGDSSAYLVSASPEHLGFGLGRHACPGRFFAANELKIVLSHMLMKYDIKLPDNGAVAPSKSGIFLATNPDARICVRRRKEEIVI</sequence>
<accession>Q5AR32</accession>
<accession>C8VQ85</accession>
<organism>
    <name type="scientific">Emericella nidulans (strain FGSC A4 / ATCC 38163 / CBS 112.46 / NRRL 194 / M139)</name>
    <name type="common">Aspergillus nidulans</name>
    <dbReference type="NCBI Taxonomy" id="227321"/>
    <lineage>
        <taxon>Eukaryota</taxon>
        <taxon>Fungi</taxon>
        <taxon>Dikarya</taxon>
        <taxon>Ascomycota</taxon>
        <taxon>Pezizomycotina</taxon>
        <taxon>Eurotiomycetes</taxon>
        <taxon>Eurotiomycetidae</taxon>
        <taxon>Eurotiales</taxon>
        <taxon>Aspergillaceae</taxon>
        <taxon>Aspergillus</taxon>
        <taxon>Aspergillus subgen. Nidulantes</taxon>
    </lineage>
</organism>